<name>BAS1_PYRO7</name>
<evidence type="ECO:0000255" key="1"/>
<evidence type="ECO:0000256" key="2">
    <source>
        <dbReference type="SAM" id="MobiDB-lite"/>
    </source>
</evidence>
<evidence type="ECO:0000269" key="3">
    <source>
    </source>
</evidence>
<evidence type="ECO:0000269" key="4">
    <source>
    </source>
</evidence>
<evidence type="ECO:0000269" key="5">
    <source>
    </source>
</evidence>
<evidence type="ECO:0000269" key="6">
    <source>
    </source>
</evidence>
<evidence type="ECO:0000303" key="7">
    <source>
    </source>
</evidence>
<feature type="signal peptide" evidence="1">
    <location>
        <begin position="1"/>
        <end position="22"/>
    </location>
</feature>
<feature type="chain" id="PRO_5007915086" description="Biotrophy-associated secreted protein 1">
    <location>
        <begin position="23"/>
        <end position="115"/>
    </location>
</feature>
<feature type="region of interest" description="Disordered" evidence="2">
    <location>
        <begin position="24"/>
        <end position="115"/>
    </location>
</feature>
<feature type="compositionally biased region" description="Basic and acidic residues" evidence="2">
    <location>
        <begin position="46"/>
        <end position="55"/>
    </location>
</feature>
<feature type="compositionally biased region" description="Basic and acidic residues" evidence="2">
    <location>
        <begin position="91"/>
        <end position="115"/>
    </location>
</feature>
<accession>G5EHI7</accession>
<proteinExistence type="evidence at transcript level"/>
<organism>
    <name type="scientific">Pyricularia oryzae (strain 70-15 / ATCC MYA-4617 / FGSC 8958)</name>
    <name type="common">Rice blast fungus</name>
    <name type="synonym">Magnaporthe oryzae</name>
    <dbReference type="NCBI Taxonomy" id="242507"/>
    <lineage>
        <taxon>Eukaryota</taxon>
        <taxon>Fungi</taxon>
        <taxon>Dikarya</taxon>
        <taxon>Ascomycota</taxon>
        <taxon>Pezizomycotina</taxon>
        <taxon>Sordariomycetes</taxon>
        <taxon>Sordariomycetidae</taxon>
        <taxon>Magnaporthales</taxon>
        <taxon>Pyriculariaceae</taxon>
        <taxon>Pyricularia</taxon>
    </lineage>
</organism>
<reference key="1">
    <citation type="journal article" date="2009" name="Plant Cell">
        <title>Interaction transcriptome analysis identifies Magnaporthe oryzae BAS1-4 as Biotrophy-associated secreted proteins in rice blast disease.</title>
        <authorList>
            <person name="Mosquera G."/>
            <person name="Giraldo M.C."/>
            <person name="Khang C.H."/>
            <person name="Coughlan S."/>
            <person name="Valent B."/>
        </authorList>
    </citation>
    <scope>NUCLEOTIDE SEQUENCE [GENOMIC DNA]</scope>
    <scope>INDUCTION</scope>
    <scope>FUNCTION</scope>
    <scope>DISRUPTION PHENOTYPE</scope>
    <scope>SUBCELLULAR LOCATION</scope>
    <source>
        <strain>70-15 / ATCC MYA-4617 / FGSC 8958</strain>
    </source>
</reference>
<reference key="2">
    <citation type="journal article" date="2005" name="Nature">
        <title>The genome sequence of the rice blast fungus Magnaporthe grisea.</title>
        <authorList>
            <person name="Dean R.A."/>
            <person name="Talbot N.J."/>
            <person name="Ebbole D.J."/>
            <person name="Farman M.L."/>
            <person name="Mitchell T.K."/>
            <person name="Orbach M.J."/>
            <person name="Thon M.R."/>
            <person name="Kulkarni R."/>
            <person name="Xu J.-R."/>
            <person name="Pan H."/>
            <person name="Read N.D."/>
            <person name="Lee Y.-H."/>
            <person name="Carbone I."/>
            <person name="Brown D."/>
            <person name="Oh Y.Y."/>
            <person name="Donofrio N."/>
            <person name="Jeong J.S."/>
            <person name="Soanes D.M."/>
            <person name="Djonovic S."/>
            <person name="Kolomiets E."/>
            <person name="Rehmeyer C."/>
            <person name="Li W."/>
            <person name="Harding M."/>
            <person name="Kim S."/>
            <person name="Lebrun M.-H."/>
            <person name="Bohnert H."/>
            <person name="Coughlan S."/>
            <person name="Butler J."/>
            <person name="Calvo S.E."/>
            <person name="Ma L.-J."/>
            <person name="Nicol R."/>
            <person name="Purcell S."/>
            <person name="Nusbaum C."/>
            <person name="Galagan J.E."/>
            <person name="Birren B.W."/>
        </authorList>
    </citation>
    <scope>NUCLEOTIDE SEQUENCE [LARGE SCALE GENOMIC DNA]</scope>
    <source>
        <strain>70-15 / ATCC MYA-4617 / FGSC 8958</strain>
    </source>
</reference>
<reference key="3">
    <citation type="journal article" date="2010" name="Plant Cell">
        <title>Translocation of Magnaporthe oryzae effectors into rice cells and their subsequent cell-to-cell movement.</title>
        <authorList>
            <person name="Khang C.H."/>
            <person name="Berruyer R."/>
            <person name="Giraldo M.C."/>
            <person name="Kankanala P."/>
            <person name="Park S.Y."/>
            <person name="Czymmek K."/>
            <person name="Kang S."/>
            <person name="Valent B."/>
        </authorList>
    </citation>
    <scope>SUBCELLULAR LOCATION</scope>
</reference>
<reference key="4">
    <citation type="journal article" date="2017" name="Saudi J. Biol. Sci.">
        <title>Overexpression of BAS1 in rice blast fungus can promote blast fungus growth, sporulation and virulence in planta.</title>
        <authorList>
            <person name="Yang J."/>
            <person name="Liu L."/>
            <person name="Wang Y."/>
            <person name="Wang C."/>
            <person name="Yan J."/>
            <person name="Liu Y."/>
            <person name="Wang C."/>
            <person name="Li C."/>
        </authorList>
    </citation>
    <scope>FUNCTION</scope>
</reference>
<reference key="5">
    <citation type="journal article" date="2019" name="Environ. Sci. Pollut. Res. Int.">
        <title>Effects of exogenous salicylic acid and pH on pathogenicity of biotrophy-associated secreted protein 1 (BAS1)-overexpressing strain, Magnaporthe oryzae.</title>
        <authorList>
            <person name="Yang J."/>
            <person name="Wang Y."/>
            <person name="Liu L."/>
            <person name="Liu L."/>
            <person name="Wang C."/>
            <person name="Wang C."/>
            <person name="Li C."/>
        </authorList>
    </citation>
    <scope>FUNCTION</scope>
</reference>
<comment type="function">
    <text evidence="3 5 6">Secreted effector involved in biotrophic colonization of plant cells (PubMed:19357089). Induces an early, basal defense response in susceptible rice, including rapid callose deposition and ROS production in leaves and calli (PubMed:29551940, PubMed:29931642). Also promotes sporulation and mycelia growth suggesting a role across the whole process of interaction, from the biotrophic phase to sporulation (PubMed:29551940).</text>
</comment>
<comment type="subcellular location">
    <subcellularLocation>
        <location evidence="3">Secreted</location>
    </subcellularLocation>
    <subcellularLocation>
        <location evidence="3 4">Host cytoplasm</location>
    </subcellularLocation>
    <text evidence="3 4">Secreted into the biotrophic interfacial complexes (BICs).</text>
</comment>
<comment type="induction">
    <text evidence="3">Expression is highly up-regulated in invasive hyphae.</text>
</comment>
<comment type="disruption phenotype">
    <text evidence="3">Leads to a slight decrease in lesion numbers and lesion sizes after host leaves infection.</text>
</comment>
<protein>
    <recommendedName>
        <fullName evidence="7">Biotrophy-associated secreted protein 1</fullName>
    </recommendedName>
</protein>
<dbReference type="EMBL" id="FJ807764">
    <property type="protein sequence ID" value="ACQ73206.1"/>
    <property type="molecule type" value="Genomic_DNA"/>
</dbReference>
<dbReference type="EMBL" id="CM001231">
    <property type="protein sequence ID" value="EHA58149.1"/>
    <property type="molecule type" value="Genomic_DNA"/>
</dbReference>
<dbReference type="RefSeq" id="XP_003710761.1">
    <property type="nucleotide sequence ID" value="XM_003710713.1"/>
</dbReference>
<dbReference type="STRING" id="242507.G5EHI7"/>
<dbReference type="EnsemblFungi" id="MGG_04795T0">
    <property type="protein sequence ID" value="MGG_04795T0"/>
    <property type="gene ID" value="MGG_04795"/>
</dbReference>
<dbReference type="GeneID" id="2677789"/>
<dbReference type="KEGG" id="mgr:MGG_04795"/>
<dbReference type="VEuPathDB" id="FungiDB:MGG_04795"/>
<dbReference type="HOGENOM" id="CLU_2109510_0_0_1"/>
<dbReference type="InParanoid" id="G5EHI7"/>
<dbReference type="OrthoDB" id="5224852at2759"/>
<dbReference type="PHI-base" id="PHI:8200"/>
<dbReference type="Proteomes" id="UP000009058">
    <property type="component" value="Chromosome 1"/>
</dbReference>
<dbReference type="GO" id="GO:0005576">
    <property type="term" value="C:extracellular region"/>
    <property type="evidence" value="ECO:0007669"/>
    <property type="project" value="UniProtKB-SubCell"/>
</dbReference>
<dbReference type="GO" id="GO:0030430">
    <property type="term" value="C:host cell cytoplasm"/>
    <property type="evidence" value="ECO:0007669"/>
    <property type="project" value="UniProtKB-SubCell"/>
</dbReference>
<gene>
    <name evidence="7" type="primary">BAS1</name>
    <name type="ORF">MGG_04795</name>
</gene>
<sequence>MHVFNFAALFTVLATFTATAAAADQGSNTFDQRYQGYPWRPANGPIREEKQENVGHRRGGAEYFTSGSPSIAAEDYSAKNAPSRFEQWKAQQKERAERKQDRGLNGIRRVENYYP</sequence>
<keyword id="KW-1035">Host cytoplasm</keyword>
<keyword id="KW-1185">Reference proteome</keyword>
<keyword id="KW-0964">Secreted</keyword>
<keyword id="KW-0732">Signal</keyword>